<gene>
    <name evidence="1" type="primary">thiC</name>
    <name type="ordered locus">Caul_3175</name>
</gene>
<feature type="chain" id="PRO_1000075434" description="Phosphomethylpyrimidine synthase">
    <location>
        <begin position="1"/>
        <end position="611"/>
    </location>
</feature>
<feature type="binding site" evidence="1">
    <location>
        <position position="218"/>
    </location>
    <ligand>
        <name>substrate</name>
    </ligand>
</feature>
<feature type="binding site" evidence="1">
    <location>
        <position position="247"/>
    </location>
    <ligand>
        <name>substrate</name>
    </ligand>
</feature>
<feature type="binding site" evidence="1">
    <location>
        <position position="276"/>
    </location>
    <ligand>
        <name>substrate</name>
    </ligand>
</feature>
<feature type="binding site" evidence="1">
    <location>
        <position position="312"/>
    </location>
    <ligand>
        <name>substrate</name>
    </ligand>
</feature>
<feature type="binding site" evidence="1">
    <location>
        <begin position="332"/>
        <end position="334"/>
    </location>
    <ligand>
        <name>substrate</name>
    </ligand>
</feature>
<feature type="binding site" evidence="1">
    <location>
        <begin position="373"/>
        <end position="376"/>
    </location>
    <ligand>
        <name>substrate</name>
    </ligand>
</feature>
<feature type="binding site" evidence="1">
    <location>
        <position position="412"/>
    </location>
    <ligand>
        <name>substrate</name>
    </ligand>
</feature>
<feature type="binding site" evidence="1">
    <location>
        <position position="416"/>
    </location>
    <ligand>
        <name>Zn(2+)</name>
        <dbReference type="ChEBI" id="CHEBI:29105"/>
    </ligand>
</feature>
<feature type="binding site" evidence="1">
    <location>
        <position position="439"/>
    </location>
    <ligand>
        <name>substrate</name>
    </ligand>
</feature>
<feature type="binding site" evidence="1">
    <location>
        <position position="480"/>
    </location>
    <ligand>
        <name>Zn(2+)</name>
        <dbReference type="ChEBI" id="CHEBI:29105"/>
    </ligand>
</feature>
<feature type="binding site" evidence="1">
    <location>
        <position position="560"/>
    </location>
    <ligand>
        <name>[4Fe-4S] cluster</name>
        <dbReference type="ChEBI" id="CHEBI:49883"/>
        <note>4Fe-4S-S-AdoMet</note>
    </ligand>
</feature>
<feature type="binding site" evidence="1">
    <location>
        <position position="563"/>
    </location>
    <ligand>
        <name>[4Fe-4S] cluster</name>
        <dbReference type="ChEBI" id="CHEBI:49883"/>
        <note>4Fe-4S-S-AdoMet</note>
    </ligand>
</feature>
<feature type="binding site" evidence="1">
    <location>
        <position position="568"/>
    </location>
    <ligand>
        <name>[4Fe-4S] cluster</name>
        <dbReference type="ChEBI" id="CHEBI:49883"/>
        <note>4Fe-4S-S-AdoMet</note>
    </ligand>
</feature>
<dbReference type="EC" id="4.1.99.17" evidence="1"/>
<dbReference type="EMBL" id="CP000927">
    <property type="protein sequence ID" value="ABZ72302.1"/>
    <property type="molecule type" value="Genomic_DNA"/>
</dbReference>
<dbReference type="SMR" id="B0T2Q1"/>
<dbReference type="STRING" id="366602.Caul_3175"/>
<dbReference type="KEGG" id="cak:Caul_3175"/>
<dbReference type="eggNOG" id="COG0422">
    <property type="taxonomic scope" value="Bacteria"/>
</dbReference>
<dbReference type="HOGENOM" id="CLU_013181_2_1_5"/>
<dbReference type="OrthoDB" id="9805897at2"/>
<dbReference type="UniPathway" id="UPA00060"/>
<dbReference type="GO" id="GO:0005829">
    <property type="term" value="C:cytosol"/>
    <property type="evidence" value="ECO:0007669"/>
    <property type="project" value="TreeGrafter"/>
</dbReference>
<dbReference type="GO" id="GO:0051539">
    <property type="term" value="F:4 iron, 4 sulfur cluster binding"/>
    <property type="evidence" value="ECO:0007669"/>
    <property type="project" value="UniProtKB-KW"/>
</dbReference>
<dbReference type="GO" id="GO:0016830">
    <property type="term" value="F:carbon-carbon lyase activity"/>
    <property type="evidence" value="ECO:0007669"/>
    <property type="project" value="InterPro"/>
</dbReference>
<dbReference type="GO" id="GO:0008270">
    <property type="term" value="F:zinc ion binding"/>
    <property type="evidence" value="ECO:0007669"/>
    <property type="project" value="UniProtKB-UniRule"/>
</dbReference>
<dbReference type="GO" id="GO:0009228">
    <property type="term" value="P:thiamine biosynthetic process"/>
    <property type="evidence" value="ECO:0007669"/>
    <property type="project" value="UniProtKB-KW"/>
</dbReference>
<dbReference type="GO" id="GO:0009229">
    <property type="term" value="P:thiamine diphosphate biosynthetic process"/>
    <property type="evidence" value="ECO:0007669"/>
    <property type="project" value="UniProtKB-UniRule"/>
</dbReference>
<dbReference type="FunFam" id="3.20.20.540:FF:000001">
    <property type="entry name" value="Phosphomethylpyrimidine synthase"/>
    <property type="match status" value="1"/>
</dbReference>
<dbReference type="Gene3D" id="6.10.250.620">
    <property type="match status" value="1"/>
</dbReference>
<dbReference type="Gene3D" id="3.20.20.540">
    <property type="entry name" value="Radical SAM ThiC family, central domain"/>
    <property type="match status" value="1"/>
</dbReference>
<dbReference type="HAMAP" id="MF_00089">
    <property type="entry name" value="ThiC"/>
    <property type="match status" value="1"/>
</dbReference>
<dbReference type="InterPro" id="IPR037509">
    <property type="entry name" value="ThiC"/>
</dbReference>
<dbReference type="InterPro" id="IPR025747">
    <property type="entry name" value="ThiC-associated_dom"/>
</dbReference>
<dbReference type="InterPro" id="IPR038521">
    <property type="entry name" value="ThiC/Bza_core_dom"/>
</dbReference>
<dbReference type="InterPro" id="IPR002817">
    <property type="entry name" value="ThiC/BzaA/B"/>
</dbReference>
<dbReference type="NCBIfam" id="NF006763">
    <property type="entry name" value="PRK09284.1"/>
    <property type="match status" value="1"/>
</dbReference>
<dbReference type="NCBIfam" id="NF009895">
    <property type="entry name" value="PRK13352.1"/>
    <property type="match status" value="1"/>
</dbReference>
<dbReference type="NCBIfam" id="TIGR00190">
    <property type="entry name" value="thiC"/>
    <property type="match status" value="1"/>
</dbReference>
<dbReference type="PANTHER" id="PTHR30557:SF1">
    <property type="entry name" value="PHOSPHOMETHYLPYRIMIDINE SYNTHASE, CHLOROPLASTIC"/>
    <property type="match status" value="1"/>
</dbReference>
<dbReference type="PANTHER" id="PTHR30557">
    <property type="entry name" value="THIAMINE BIOSYNTHESIS PROTEIN THIC"/>
    <property type="match status" value="1"/>
</dbReference>
<dbReference type="Pfam" id="PF13667">
    <property type="entry name" value="ThiC-associated"/>
    <property type="match status" value="1"/>
</dbReference>
<dbReference type="Pfam" id="PF01964">
    <property type="entry name" value="ThiC_Rad_SAM"/>
    <property type="match status" value="1"/>
</dbReference>
<dbReference type="SFLD" id="SFLDF00407">
    <property type="entry name" value="phosphomethylpyrimidine_syntha"/>
    <property type="match status" value="1"/>
</dbReference>
<dbReference type="SFLD" id="SFLDG01114">
    <property type="entry name" value="phosphomethylpyrimidine_syntha"/>
    <property type="match status" value="1"/>
</dbReference>
<dbReference type="SFLD" id="SFLDS00113">
    <property type="entry name" value="Radical_SAM_Phosphomethylpyrim"/>
    <property type="match status" value="1"/>
</dbReference>
<comment type="function">
    <text evidence="1">Catalyzes the synthesis of the hydroxymethylpyrimidine phosphate (HMP-P) moiety of thiamine from aminoimidazole ribotide (AIR) in a radical S-adenosyl-L-methionine (SAM)-dependent reaction.</text>
</comment>
<comment type="catalytic activity">
    <reaction evidence="1">
        <text>5-amino-1-(5-phospho-beta-D-ribosyl)imidazole + S-adenosyl-L-methionine = 4-amino-2-methyl-5-(phosphooxymethyl)pyrimidine + CO + 5'-deoxyadenosine + formate + L-methionine + 3 H(+)</text>
        <dbReference type="Rhea" id="RHEA:24840"/>
        <dbReference type="ChEBI" id="CHEBI:15378"/>
        <dbReference type="ChEBI" id="CHEBI:15740"/>
        <dbReference type="ChEBI" id="CHEBI:17245"/>
        <dbReference type="ChEBI" id="CHEBI:17319"/>
        <dbReference type="ChEBI" id="CHEBI:57844"/>
        <dbReference type="ChEBI" id="CHEBI:58354"/>
        <dbReference type="ChEBI" id="CHEBI:59789"/>
        <dbReference type="ChEBI" id="CHEBI:137981"/>
        <dbReference type="EC" id="4.1.99.17"/>
    </reaction>
</comment>
<comment type="cofactor">
    <cofactor evidence="1">
        <name>[4Fe-4S] cluster</name>
        <dbReference type="ChEBI" id="CHEBI:49883"/>
    </cofactor>
    <text evidence="1">Binds 1 [4Fe-4S] cluster per subunit. The cluster is coordinated with 3 cysteines and an exchangeable S-adenosyl-L-methionine.</text>
</comment>
<comment type="pathway">
    <text evidence="1">Cofactor biosynthesis; thiamine diphosphate biosynthesis.</text>
</comment>
<comment type="subunit">
    <text evidence="1">Homodimer.</text>
</comment>
<comment type="similarity">
    <text evidence="1">Belongs to the ThiC family.</text>
</comment>
<name>THIC_CAUSK</name>
<evidence type="ECO:0000255" key="1">
    <source>
        <dbReference type="HAMAP-Rule" id="MF_00089"/>
    </source>
</evidence>
<organism>
    <name type="scientific">Caulobacter sp. (strain K31)</name>
    <dbReference type="NCBI Taxonomy" id="366602"/>
    <lineage>
        <taxon>Bacteria</taxon>
        <taxon>Pseudomonadati</taxon>
        <taxon>Pseudomonadota</taxon>
        <taxon>Alphaproteobacteria</taxon>
        <taxon>Caulobacterales</taxon>
        <taxon>Caulobacteraceae</taxon>
        <taxon>Caulobacter</taxon>
    </lineage>
</organism>
<sequence>MNVQLPIKDAIGAIPTGERPGSRKVYQAGSLFPDIRVPFREVAVHPSANEPPVTIYDPSGPYTDPHAKIDIEQGLERSREPWIIARGDCELVATPREVKPEDNGFAQGKHLAPQFTAKRPIFKGAQGKLVTQLEYARAGIVTAEMEYVAIRENLRREQDRPCVRDGEDFGASIPDFVTPEFVRQEVARGRAIIPANINHGELEPMAIGRNFLVKINANIGNSAVLSTVADEVDKLVWATRWGADTVMDLSTGRNIHNIRDWIIRNSPVPIGTVPIYQALEKVNGVAEDLNWEVFRDTLIEQAEQGVDYFTIHAGVRLPFIPLTAKRVTGIVSRGGSIMAKWCLAHHKENFLYERFEDICEIMRSYDVSFSLGDGLRPGSTADANDEAQFAELRTLGELTKVAWKHGVQVMIEGPGHVAMHKIKANMDEQLKHCHEAPFYTLGPLTTDIAPGYDHITSAIGAAMIGWFGTAMLCYVTPKEHLGLPDRDDVKTGVITYKLAAHAADLAKGHPGAAMWDDAISRARFEFRWEDQFNLGLDPETARAFHDETLPKEAHKTAHFCSMCGPKFCSMKISQEVREFAAGMAPNSIEQGMAEMSDKFREQGSEIYLKTE</sequence>
<protein>
    <recommendedName>
        <fullName evidence="1">Phosphomethylpyrimidine synthase</fullName>
        <ecNumber evidence="1">4.1.99.17</ecNumber>
    </recommendedName>
    <alternativeName>
        <fullName evidence="1">Hydroxymethylpyrimidine phosphate synthase</fullName>
        <shortName evidence="1">HMP-P synthase</shortName>
        <shortName evidence="1">HMP-phosphate synthase</shortName>
        <shortName evidence="1">HMPP synthase</shortName>
    </alternativeName>
    <alternativeName>
        <fullName evidence="1">Thiamine biosynthesis protein ThiC</fullName>
    </alternativeName>
</protein>
<proteinExistence type="inferred from homology"/>
<keyword id="KW-0004">4Fe-4S</keyword>
<keyword id="KW-0408">Iron</keyword>
<keyword id="KW-0411">Iron-sulfur</keyword>
<keyword id="KW-0456">Lyase</keyword>
<keyword id="KW-0479">Metal-binding</keyword>
<keyword id="KW-0949">S-adenosyl-L-methionine</keyword>
<keyword id="KW-0784">Thiamine biosynthesis</keyword>
<keyword id="KW-0862">Zinc</keyword>
<accession>B0T2Q1</accession>
<reference key="1">
    <citation type="submission" date="2008-01" db="EMBL/GenBank/DDBJ databases">
        <title>Complete sequence of chromosome of Caulobacter sp. K31.</title>
        <authorList>
            <consortium name="US DOE Joint Genome Institute"/>
            <person name="Copeland A."/>
            <person name="Lucas S."/>
            <person name="Lapidus A."/>
            <person name="Barry K."/>
            <person name="Glavina del Rio T."/>
            <person name="Dalin E."/>
            <person name="Tice H."/>
            <person name="Pitluck S."/>
            <person name="Bruce D."/>
            <person name="Goodwin L."/>
            <person name="Thompson L.S."/>
            <person name="Brettin T."/>
            <person name="Detter J.C."/>
            <person name="Han C."/>
            <person name="Schmutz J."/>
            <person name="Larimer F."/>
            <person name="Land M."/>
            <person name="Hauser L."/>
            <person name="Kyrpides N."/>
            <person name="Kim E."/>
            <person name="Stephens C."/>
            <person name="Richardson P."/>
        </authorList>
    </citation>
    <scope>NUCLEOTIDE SEQUENCE [LARGE SCALE GENOMIC DNA]</scope>
    <source>
        <strain>K31</strain>
    </source>
</reference>